<organism>
    <name type="scientific">Acanthamoeba polyphaga mimivirus</name>
    <name type="common">APMV</name>
    <dbReference type="NCBI Taxonomy" id="212035"/>
    <lineage>
        <taxon>Viruses</taxon>
        <taxon>Varidnaviria</taxon>
        <taxon>Bamfordvirae</taxon>
        <taxon>Nucleocytoviricota</taxon>
        <taxon>Megaviricetes</taxon>
        <taxon>Imitervirales</taxon>
        <taxon>Mimiviridae</taxon>
        <taxon>Megamimivirinae</taxon>
        <taxon>Mimivirus</taxon>
        <taxon>Mimivirus bradfordmassiliense</taxon>
    </lineage>
</organism>
<name>YR346_MIMIV</name>
<sequence>MTHNFLNHAPGFSYQNQAPQPQYYTRQPPSAGAHYPPNPLTPSQYVGGPSYSAGRPYQSQHAYAQPGCTSCGTGCNTGCNVQANCNIPNFYTDFKPPSFQTTYCPPSVNVGCYNTPQKTYPQTNNYRSAHNPNQFNMGFNTQVPSFNYGGGPCVTYGTPSYSQQQEPQHYYKKHKHHSHHRPKHVKSSRSCKSCN</sequence>
<keyword id="KW-1185">Reference proteome</keyword>
<accession>Q5UQT4</accession>
<feature type="chain" id="PRO_0000244039" description="Uncharacterized protein R346">
    <location>
        <begin position="1"/>
        <end position="195"/>
    </location>
</feature>
<feature type="region of interest" description="Disordered" evidence="1">
    <location>
        <begin position="1"/>
        <end position="51"/>
    </location>
</feature>
<feature type="region of interest" description="Disordered" evidence="1">
    <location>
        <begin position="160"/>
        <end position="195"/>
    </location>
</feature>
<feature type="compositionally biased region" description="Polar residues" evidence="1">
    <location>
        <begin position="13"/>
        <end position="28"/>
    </location>
</feature>
<feature type="compositionally biased region" description="Basic residues" evidence="1">
    <location>
        <begin position="170"/>
        <end position="189"/>
    </location>
</feature>
<dbReference type="EMBL" id="AY653733">
    <property type="protein sequence ID" value="AAV50615.1"/>
    <property type="molecule type" value="Genomic_DNA"/>
</dbReference>
<dbReference type="KEGG" id="vg:9924964"/>
<dbReference type="Proteomes" id="UP000001134">
    <property type="component" value="Genome"/>
</dbReference>
<organismHost>
    <name type="scientific">Acanthamoeba polyphaga</name>
    <name type="common">Amoeba</name>
    <dbReference type="NCBI Taxonomy" id="5757"/>
</organismHost>
<proteinExistence type="predicted"/>
<gene>
    <name type="ordered locus">MIMI_R346</name>
</gene>
<reference key="1">
    <citation type="journal article" date="2004" name="Science">
        <title>The 1.2-megabase genome sequence of Mimivirus.</title>
        <authorList>
            <person name="Raoult D."/>
            <person name="Audic S."/>
            <person name="Robert C."/>
            <person name="Abergel C."/>
            <person name="Renesto P."/>
            <person name="Ogata H."/>
            <person name="La Scola B."/>
            <person name="Susan M."/>
            <person name="Claverie J.-M."/>
        </authorList>
    </citation>
    <scope>NUCLEOTIDE SEQUENCE [LARGE SCALE GENOMIC DNA]</scope>
    <source>
        <strain>Rowbotham-Bradford</strain>
    </source>
</reference>
<protein>
    <recommendedName>
        <fullName>Uncharacterized protein R346</fullName>
    </recommendedName>
</protein>
<evidence type="ECO:0000256" key="1">
    <source>
        <dbReference type="SAM" id="MobiDB-lite"/>
    </source>
</evidence>